<evidence type="ECO:0000255" key="1">
    <source>
        <dbReference type="HAMAP-Rule" id="MF_00038"/>
    </source>
</evidence>
<comment type="function">
    <text evidence="1">Catalyzes the initial step of the lipid cycle reactions in the biosynthesis of the cell wall peptidoglycan: transfers peptidoglycan precursor phospho-MurNAc-pentapeptide from UDP-MurNAc-pentapeptide onto the lipid carrier undecaprenyl phosphate, yielding undecaprenyl-pyrophosphoryl-MurNAc-pentapeptide, known as lipid I.</text>
</comment>
<comment type="catalytic activity">
    <reaction evidence="1">
        <text>UDP-N-acetyl-alpha-D-muramoyl-L-alanyl-gamma-D-glutamyl-meso-2,6-diaminopimeloyl-D-alanyl-D-alanine + di-trans,octa-cis-undecaprenyl phosphate = di-trans,octa-cis-undecaprenyl diphospho-N-acetyl-alpha-D-muramoyl-L-alanyl-D-glutamyl-meso-2,6-diaminopimeloyl-D-alanyl-D-alanine + UMP</text>
        <dbReference type="Rhea" id="RHEA:28386"/>
        <dbReference type="ChEBI" id="CHEBI:57865"/>
        <dbReference type="ChEBI" id="CHEBI:60392"/>
        <dbReference type="ChEBI" id="CHEBI:61386"/>
        <dbReference type="ChEBI" id="CHEBI:61387"/>
        <dbReference type="EC" id="2.7.8.13"/>
    </reaction>
</comment>
<comment type="cofactor">
    <cofactor evidence="1">
        <name>Mg(2+)</name>
        <dbReference type="ChEBI" id="CHEBI:18420"/>
    </cofactor>
</comment>
<comment type="pathway">
    <text evidence="1">Cell wall biogenesis; peptidoglycan biosynthesis.</text>
</comment>
<comment type="subcellular location">
    <subcellularLocation>
        <location evidence="1">Cell inner membrane</location>
        <topology evidence="1">Multi-pass membrane protein</topology>
    </subcellularLocation>
</comment>
<comment type="similarity">
    <text evidence="1">Belongs to the glycosyltransferase 4 family. MraY subfamily.</text>
</comment>
<name>MRAY_SHEHH</name>
<gene>
    <name evidence="1" type="primary">mraY</name>
    <name type="ordered locus">Shal_0452</name>
</gene>
<feature type="chain" id="PRO_1000074561" description="Phospho-N-acetylmuramoyl-pentapeptide-transferase">
    <location>
        <begin position="1"/>
        <end position="360"/>
    </location>
</feature>
<feature type="transmembrane region" description="Helical" evidence="1">
    <location>
        <begin position="26"/>
        <end position="46"/>
    </location>
</feature>
<feature type="transmembrane region" description="Helical" evidence="1">
    <location>
        <begin position="73"/>
        <end position="93"/>
    </location>
</feature>
<feature type="transmembrane region" description="Helical" evidence="1">
    <location>
        <begin position="97"/>
        <end position="117"/>
    </location>
</feature>
<feature type="transmembrane region" description="Helical" evidence="1">
    <location>
        <begin position="132"/>
        <end position="152"/>
    </location>
</feature>
<feature type="transmembrane region" description="Helical" evidence="1">
    <location>
        <begin position="168"/>
        <end position="188"/>
    </location>
</feature>
<feature type="transmembrane region" description="Helical" evidence="1">
    <location>
        <begin position="199"/>
        <end position="219"/>
    </location>
</feature>
<feature type="transmembrane region" description="Helical" evidence="1">
    <location>
        <begin position="236"/>
        <end position="256"/>
    </location>
</feature>
<feature type="transmembrane region" description="Helical" evidence="1">
    <location>
        <begin position="263"/>
        <end position="283"/>
    </location>
</feature>
<feature type="transmembrane region" description="Helical" evidence="1">
    <location>
        <begin position="288"/>
        <end position="308"/>
    </location>
</feature>
<feature type="transmembrane region" description="Helical" evidence="1">
    <location>
        <begin position="338"/>
        <end position="358"/>
    </location>
</feature>
<reference key="1">
    <citation type="submission" date="2008-01" db="EMBL/GenBank/DDBJ databases">
        <title>Complete sequence of Shewanella halifaxensis HAW-EB4.</title>
        <authorList>
            <consortium name="US DOE Joint Genome Institute"/>
            <person name="Copeland A."/>
            <person name="Lucas S."/>
            <person name="Lapidus A."/>
            <person name="Glavina del Rio T."/>
            <person name="Dalin E."/>
            <person name="Tice H."/>
            <person name="Bruce D."/>
            <person name="Goodwin L."/>
            <person name="Pitluck S."/>
            <person name="Sims D."/>
            <person name="Brettin T."/>
            <person name="Detter J.C."/>
            <person name="Han C."/>
            <person name="Kuske C.R."/>
            <person name="Schmutz J."/>
            <person name="Larimer F."/>
            <person name="Land M."/>
            <person name="Hauser L."/>
            <person name="Kyrpides N."/>
            <person name="Kim E."/>
            <person name="Zhao J.-S."/>
            <person name="Richardson P."/>
        </authorList>
    </citation>
    <scope>NUCLEOTIDE SEQUENCE [LARGE SCALE GENOMIC DNA]</scope>
    <source>
        <strain>HAW-EB4</strain>
    </source>
</reference>
<sequence length="360" mass="39796">MLVYLAEYLTQFYSGFNVFSYVTFRAILGLMTALMFSLWWGPKMIARLQLMQIGQVVRNDGPESHFSKRGTPTMGGLLILAGVFISVLLWGDLDSRYVWVVLFVLGSFGLIGFIDDYRKVVRKDTKGLIARWKYLLQSLAALLIAVYLYASAQSPGETQLVVPFFKDVMPQLGGFFIVLVYFTIVGSSNAVNLTDGLDGLAIMPTVMVAAAFALIAYLSGHVQFASYLHLPYLPGAGELVIVCTAIVGAGLGFLWFNTYPAQVFMGDVGSLSLGAALGTIAVLVRQEILLVIMGGVFVMETVSVILQVGSYKLRGQRIFRMAPIHHHYELKGWPEPRVIVRFWIISLFLVLLGLATLKLR</sequence>
<protein>
    <recommendedName>
        <fullName evidence="1">Phospho-N-acetylmuramoyl-pentapeptide-transferase</fullName>
        <ecNumber evidence="1">2.7.8.13</ecNumber>
    </recommendedName>
    <alternativeName>
        <fullName evidence="1">UDP-MurNAc-pentapeptide phosphotransferase</fullName>
    </alternativeName>
</protein>
<accession>B0TQN4</accession>
<proteinExistence type="inferred from homology"/>
<organism>
    <name type="scientific">Shewanella halifaxensis (strain HAW-EB4)</name>
    <dbReference type="NCBI Taxonomy" id="458817"/>
    <lineage>
        <taxon>Bacteria</taxon>
        <taxon>Pseudomonadati</taxon>
        <taxon>Pseudomonadota</taxon>
        <taxon>Gammaproteobacteria</taxon>
        <taxon>Alteromonadales</taxon>
        <taxon>Shewanellaceae</taxon>
        <taxon>Shewanella</taxon>
    </lineage>
</organism>
<keyword id="KW-0131">Cell cycle</keyword>
<keyword id="KW-0132">Cell division</keyword>
<keyword id="KW-0997">Cell inner membrane</keyword>
<keyword id="KW-1003">Cell membrane</keyword>
<keyword id="KW-0133">Cell shape</keyword>
<keyword id="KW-0961">Cell wall biogenesis/degradation</keyword>
<keyword id="KW-0460">Magnesium</keyword>
<keyword id="KW-0472">Membrane</keyword>
<keyword id="KW-0479">Metal-binding</keyword>
<keyword id="KW-0573">Peptidoglycan synthesis</keyword>
<keyword id="KW-0808">Transferase</keyword>
<keyword id="KW-0812">Transmembrane</keyword>
<keyword id="KW-1133">Transmembrane helix</keyword>
<dbReference type="EC" id="2.7.8.13" evidence="1"/>
<dbReference type="EMBL" id="CP000931">
    <property type="protein sequence ID" value="ABZ75027.1"/>
    <property type="molecule type" value="Genomic_DNA"/>
</dbReference>
<dbReference type="RefSeq" id="WP_012275581.1">
    <property type="nucleotide sequence ID" value="NC_010334.1"/>
</dbReference>
<dbReference type="SMR" id="B0TQN4"/>
<dbReference type="STRING" id="458817.Shal_0452"/>
<dbReference type="KEGG" id="shl:Shal_0452"/>
<dbReference type="eggNOG" id="COG0472">
    <property type="taxonomic scope" value="Bacteria"/>
</dbReference>
<dbReference type="HOGENOM" id="CLU_023982_0_0_6"/>
<dbReference type="OrthoDB" id="9805475at2"/>
<dbReference type="UniPathway" id="UPA00219"/>
<dbReference type="Proteomes" id="UP000001317">
    <property type="component" value="Chromosome"/>
</dbReference>
<dbReference type="GO" id="GO:0005886">
    <property type="term" value="C:plasma membrane"/>
    <property type="evidence" value="ECO:0007669"/>
    <property type="project" value="UniProtKB-SubCell"/>
</dbReference>
<dbReference type="GO" id="GO:0046872">
    <property type="term" value="F:metal ion binding"/>
    <property type="evidence" value="ECO:0007669"/>
    <property type="project" value="UniProtKB-KW"/>
</dbReference>
<dbReference type="GO" id="GO:0008963">
    <property type="term" value="F:phospho-N-acetylmuramoyl-pentapeptide-transferase activity"/>
    <property type="evidence" value="ECO:0007669"/>
    <property type="project" value="UniProtKB-UniRule"/>
</dbReference>
<dbReference type="GO" id="GO:0051992">
    <property type="term" value="F:UDP-N-acetylmuramoyl-L-alanyl-D-glutamyl-meso-2,6-diaminopimelyl-D-alanyl-D-alanine:undecaprenyl-phosphate transferase activity"/>
    <property type="evidence" value="ECO:0007669"/>
    <property type="project" value="RHEA"/>
</dbReference>
<dbReference type="GO" id="GO:0051301">
    <property type="term" value="P:cell division"/>
    <property type="evidence" value="ECO:0007669"/>
    <property type="project" value="UniProtKB-KW"/>
</dbReference>
<dbReference type="GO" id="GO:0071555">
    <property type="term" value="P:cell wall organization"/>
    <property type="evidence" value="ECO:0007669"/>
    <property type="project" value="UniProtKB-KW"/>
</dbReference>
<dbReference type="GO" id="GO:0009252">
    <property type="term" value="P:peptidoglycan biosynthetic process"/>
    <property type="evidence" value="ECO:0007669"/>
    <property type="project" value="UniProtKB-UniRule"/>
</dbReference>
<dbReference type="GO" id="GO:0008360">
    <property type="term" value="P:regulation of cell shape"/>
    <property type="evidence" value="ECO:0007669"/>
    <property type="project" value="UniProtKB-KW"/>
</dbReference>
<dbReference type="CDD" id="cd06852">
    <property type="entry name" value="GT_MraY"/>
    <property type="match status" value="1"/>
</dbReference>
<dbReference type="HAMAP" id="MF_00038">
    <property type="entry name" value="MraY"/>
    <property type="match status" value="1"/>
</dbReference>
<dbReference type="InterPro" id="IPR000715">
    <property type="entry name" value="Glycosyl_transferase_4"/>
</dbReference>
<dbReference type="InterPro" id="IPR003524">
    <property type="entry name" value="PNAcMuramoyl-5peptid_Trfase"/>
</dbReference>
<dbReference type="InterPro" id="IPR018480">
    <property type="entry name" value="PNAcMuramoyl-5peptid_Trfase_CS"/>
</dbReference>
<dbReference type="NCBIfam" id="TIGR00445">
    <property type="entry name" value="mraY"/>
    <property type="match status" value="1"/>
</dbReference>
<dbReference type="PANTHER" id="PTHR22926">
    <property type="entry name" value="PHOSPHO-N-ACETYLMURAMOYL-PENTAPEPTIDE-TRANSFERASE"/>
    <property type="match status" value="1"/>
</dbReference>
<dbReference type="PANTHER" id="PTHR22926:SF5">
    <property type="entry name" value="PHOSPHO-N-ACETYLMURAMOYL-PENTAPEPTIDE-TRANSFERASE HOMOLOG"/>
    <property type="match status" value="1"/>
</dbReference>
<dbReference type="Pfam" id="PF00953">
    <property type="entry name" value="Glycos_transf_4"/>
    <property type="match status" value="1"/>
</dbReference>
<dbReference type="Pfam" id="PF10555">
    <property type="entry name" value="MraY_sig1"/>
    <property type="match status" value="1"/>
</dbReference>
<dbReference type="PROSITE" id="PS01347">
    <property type="entry name" value="MRAY_1"/>
    <property type="match status" value="1"/>
</dbReference>
<dbReference type="PROSITE" id="PS01348">
    <property type="entry name" value="MRAY_2"/>
    <property type="match status" value="1"/>
</dbReference>